<name>IPYR_HORVV</name>
<feature type="chain" id="PRO_0000137575" description="Soluble inorganic pyrophosphatase">
    <location>
        <begin position="1"/>
        <end position="215"/>
    </location>
</feature>
<feature type="region of interest" description="Disordered" evidence="2">
    <location>
        <begin position="1"/>
        <end position="24"/>
    </location>
</feature>
<feature type="compositionally biased region" description="Low complexity" evidence="2">
    <location>
        <begin position="1"/>
        <end position="21"/>
    </location>
</feature>
<feature type="binding site" evidence="1">
    <location>
        <position position="103"/>
    </location>
    <ligand>
        <name>Mg(2+)</name>
        <dbReference type="ChEBI" id="CHEBI:18420"/>
        <label>1</label>
    </ligand>
</feature>
<feature type="binding site" evidence="1">
    <location>
        <position position="108"/>
    </location>
    <ligand>
        <name>Mg(2+)</name>
        <dbReference type="ChEBI" id="CHEBI:18420"/>
        <label>1</label>
    </ligand>
</feature>
<feature type="binding site" evidence="1">
    <location>
        <position position="108"/>
    </location>
    <ligand>
        <name>Mg(2+)</name>
        <dbReference type="ChEBI" id="CHEBI:18420"/>
        <label>2</label>
    </ligand>
</feature>
<feature type="binding site" evidence="1">
    <location>
        <position position="140"/>
    </location>
    <ligand>
        <name>Mg(2+)</name>
        <dbReference type="ChEBI" id="CHEBI:18420"/>
        <label>1</label>
    </ligand>
</feature>
<sequence>MSQEDSTSAAAAQQPTSRPAPKLNERILSSLSRRGGGAHPWHDLEIGPGAPAVFNVVVEITKGSKVKYELDKKTGLIKVDRVLYSSVVYPHNYGFIPRTLCEDNDPMDVLVLMQEPVIPGSFLRARAIGLMPMIDQGEKDDKIIAVCADDPEYRHYSTSVSLLPRLQEIKRLEDYKKNENKEVAVDAFLPATTAREAIQYSMDLYAQYILQSLRQ</sequence>
<evidence type="ECO:0000250" key="1"/>
<evidence type="ECO:0000256" key="2">
    <source>
        <dbReference type="SAM" id="MobiDB-lite"/>
    </source>
</evidence>
<evidence type="ECO:0000305" key="3"/>
<protein>
    <recommendedName>
        <fullName>Soluble inorganic pyrophosphatase</fullName>
        <ecNumber>3.6.1.1</ecNumber>
    </recommendedName>
    <alternativeName>
        <fullName>Pyrophosphate phospho-hydrolase</fullName>
        <shortName>PPase</shortName>
    </alternativeName>
</protein>
<organism>
    <name type="scientific">Hordeum vulgare subsp. vulgare</name>
    <name type="common">Domesticated barley</name>
    <dbReference type="NCBI Taxonomy" id="112509"/>
    <lineage>
        <taxon>Eukaryota</taxon>
        <taxon>Viridiplantae</taxon>
        <taxon>Streptophyta</taxon>
        <taxon>Embryophyta</taxon>
        <taxon>Tracheophyta</taxon>
        <taxon>Spermatophyta</taxon>
        <taxon>Magnoliopsida</taxon>
        <taxon>Liliopsida</taxon>
        <taxon>Poales</taxon>
        <taxon>Poaceae</taxon>
        <taxon>BOP clade</taxon>
        <taxon>Pooideae</taxon>
        <taxon>Triticodae</taxon>
        <taxon>Triticeae</taxon>
        <taxon>Hordeinae</taxon>
        <taxon>Hordeum</taxon>
    </lineage>
</organism>
<proteinExistence type="evidence at transcript level"/>
<gene>
    <name type="primary">IPP</name>
</gene>
<dbReference type="EC" id="3.6.1.1"/>
<dbReference type="EMBL" id="AF009675">
    <property type="protein sequence ID" value="AAC50012.1"/>
    <property type="molecule type" value="mRNA"/>
</dbReference>
<dbReference type="PIR" id="T04421">
    <property type="entry name" value="T04421"/>
</dbReference>
<dbReference type="SMR" id="O23979"/>
<dbReference type="FunCoup" id="O23979">
    <property type="interactions" value="115"/>
</dbReference>
<dbReference type="STRING" id="112509.O23979"/>
<dbReference type="PaxDb" id="4513-MLOC_75794.1"/>
<dbReference type="eggNOG" id="KOG1626">
    <property type="taxonomic scope" value="Eukaryota"/>
</dbReference>
<dbReference type="InParanoid" id="O23979"/>
<dbReference type="Proteomes" id="UP000011116">
    <property type="component" value="Unassembled WGS sequence"/>
</dbReference>
<dbReference type="GO" id="GO:0005829">
    <property type="term" value="C:cytosol"/>
    <property type="evidence" value="ECO:0000318"/>
    <property type="project" value="GO_Central"/>
</dbReference>
<dbReference type="GO" id="GO:0004427">
    <property type="term" value="F:inorganic diphosphate phosphatase activity"/>
    <property type="evidence" value="ECO:0000318"/>
    <property type="project" value="GO_Central"/>
</dbReference>
<dbReference type="GO" id="GO:0000287">
    <property type="term" value="F:magnesium ion binding"/>
    <property type="evidence" value="ECO:0007669"/>
    <property type="project" value="InterPro"/>
</dbReference>
<dbReference type="GO" id="GO:0006796">
    <property type="term" value="P:phosphate-containing compound metabolic process"/>
    <property type="evidence" value="ECO:0000318"/>
    <property type="project" value="GO_Central"/>
</dbReference>
<dbReference type="CDD" id="cd00412">
    <property type="entry name" value="pyrophosphatase"/>
    <property type="match status" value="1"/>
</dbReference>
<dbReference type="FunFam" id="3.90.80.10:FF:000002">
    <property type="entry name" value="Soluble inorganic pyrophosphatase 4"/>
    <property type="match status" value="1"/>
</dbReference>
<dbReference type="Gene3D" id="3.90.80.10">
    <property type="entry name" value="Inorganic pyrophosphatase"/>
    <property type="match status" value="1"/>
</dbReference>
<dbReference type="InterPro" id="IPR008162">
    <property type="entry name" value="Pyrophosphatase"/>
</dbReference>
<dbReference type="InterPro" id="IPR036649">
    <property type="entry name" value="Pyrophosphatase_sf"/>
</dbReference>
<dbReference type="PANTHER" id="PTHR10286">
    <property type="entry name" value="INORGANIC PYROPHOSPHATASE"/>
    <property type="match status" value="1"/>
</dbReference>
<dbReference type="Pfam" id="PF00719">
    <property type="entry name" value="Pyrophosphatase"/>
    <property type="match status" value="1"/>
</dbReference>
<dbReference type="SUPFAM" id="SSF50324">
    <property type="entry name" value="Inorganic pyrophosphatase"/>
    <property type="match status" value="1"/>
</dbReference>
<dbReference type="PROSITE" id="PS00387">
    <property type="entry name" value="PPASE"/>
    <property type="match status" value="1"/>
</dbReference>
<reference key="1">
    <citation type="journal article" date="1998" name="Plant Mol. Biol.">
        <title>Molecular cloning and characterization of an inorganic pyrophosphatase from barley.</title>
        <authorList>
            <person name="Visser K."/>
            <person name="Heimovaara-Dijkstra S."/>
            <person name="Kijne J.W."/>
            <person name="Wang M."/>
        </authorList>
    </citation>
    <scope>NUCLEOTIDE SEQUENCE [MRNA]</scope>
    <source>
        <strain>cv. Triumph</strain>
    </source>
</reference>
<comment type="function">
    <text>May play a role in germination.</text>
</comment>
<comment type="catalytic activity">
    <reaction>
        <text>diphosphate + H2O = 2 phosphate + H(+)</text>
        <dbReference type="Rhea" id="RHEA:24576"/>
        <dbReference type="ChEBI" id="CHEBI:15377"/>
        <dbReference type="ChEBI" id="CHEBI:15378"/>
        <dbReference type="ChEBI" id="CHEBI:33019"/>
        <dbReference type="ChEBI" id="CHEBI:43474"/>
        <dbReference type="EC" id="3.6.1.1"/>
    </reaction>
</comment>
<comment type="cofactor">
    <cofactor evidence="1">
        <name>Mg(2+)</name>
        <dbReference type="ChEBI" id="CHEBI:18420"/>
    </cofactor>
</comment>
<comment type="subcellular location">
    <subcellularLocation>
        <location>Cytoplasm</location>
    </subcellularLocation>
</comment>
<comment type="tissue specificity">
    <text>Expressed in metabolically active tissue such as root, shoot, embryo and aleurone.</text>
</comment>
<comment type="similarity">
    <text evidence="3">Belongs to the PPase family.</text>
</comment>
<keyword id="KW-0963">Cytoplasm</keyword>
<keyword id="KW-0378">Hydrolase</keyword>
<keyword id="KW-0460">Magnesium</keyword>
<keyword id="KW-0479">Metal-binding</keyword>
<keyword id="KW-1185">Reference proteome</keyword>
<accession>O23979</accession>